<organism>
    <name type="scientific">Neisseria subflava</name>
    <dbReference type="NCBI Taxonomy" id="28449"/>
    <lineage>
        <taxon>Bacteria</taxon>
        <taxon>Pseudomonadati</taxon>
        <taxon>Pseudomonadota</taxon>
        <taxon>Betaproteobacteria</taxon>
        <taxon>Neisseriales</taxon>
        <taxon>Neisseriaceae</taxon>
        <taxon>Neisseria</taxon>
    </lineage>
</organism>
<evidence type="ECO:0000250" key="1"/>
<evidence type="ECO:0000305" key="2"/>
<comment type="function">
    <text evidence="1">Can catalyze the hydrolysis of ATP in the presence of single-stranded DNA, the ATP-dependent uptake of single-stranded DNA by duplex DNA, and the ATP-dependent hybridization of homologous single-stranded DNAs. It interacts with LexA causing its activation and leading to its autocatalytic cleavage (By similarity).</text>
</comment>
<comment type="subcellular location">
    <subcellularLocation>
        <location evidence="1">Cytoplasm</location>
    </subcellularLocation>
</comment>
<comment type="similarity">
    <text evidence="2">Belongs to the RecA family.</text>
</comment>
<name>RECA_NEISU</name>
<keyword id="KW-0067">ATP-binding</keyword>
<keyword id="KW-0963">Cytoplasm</keyword>
<keyword id="KW-0227">DNA damage</keyword>
<keyword id="KW-0233">DNA recombination</keyword>
<keyword id="KW-0234">DNA repair</keyword>
<keyword id="KW-0238">DNA-binding</keyword>
<keyword id="KW-0547">Nucleotide-binding</keyword>
<keyword id="KW-0742">SOS response</keyword>
<reference key="1">
    <citation type="submission" date="1998-01" db="EMBL/GenBank/DDBJ databases">
        <title>Do sexual bacteria have species?</title>
        <authorList>
            <person name="Smith N.H."/>
            <person name="Donovan G.M."/>
            <person name="Carpenter A."/>
            <person name="Spratt B.G."/>
        </authorList>
    </citation>
    <scope>NUCLEOTIDE SEQUENCE [GENOMIC DNA]</scope>
    <source>
        <strain>ATCC 49275 / DSM 17610 / CCUG 23930 / CIP 103343 / NRL 30017 / 37</strain>
    </source>
</reference>
<sequence>STGSLGVDLALGVGGLPRGRVVEIFGPESSGKTTLCLEAIAQCQKNGGICAFIDAEHAFDPIYARKLGVKVEELYLSQPDTGEQALEICDTLVRSGGIDMVVVDSVAALVPKAEIEGEMGDSHVGLQARLMSQALRKLTGHIKRTNTLVVFINQIRMKIGVMFGSPETTTGGNALKFYASVRLDIRRTGQIKKGDDVIGNETKVKVIKNKVAPPFRQAEFDILYGEGISWEGELIDL</sequence>
<proteinExistence type="inferred from homology"/>
<feature type="chain" id="PRO_0000122784" description="Protein RecA">
    <location>
        <begin position="1" status="less than"/>
        <end position="237" status="greater than"/>
    </location>
</feature>
<feature type="binding site" evidence="1">
    <location>
        <begin position="26"/>
        <end position="33"/>
    </location>
    <ligand>
        <name>ATP</name>
        <dbReference type="ChEBI" id="CHEBI:30616"/>
    </ligand>
</feature>
<feature type="non-terminal residue">
    <location>
        <position position="1"/>
    </location>
</feature>
<feature type="non-terminal residue">
    <location>
        <position position="237"/>
    </location>
</feature>
<dbReference type="EMBL" id="AJ223874">
    <property type="protein sequence ID" value="CAA11605.1"/>
    <property type="molecule type" value="Genomic_DNA"/>
</dbReference>
<dbReference type="SMR" id="O86414"/>
<dbReference type="GO" id="GO:0005829">
    <property type="term" value="C:cytosol"/>
    <property type="evidence" value="ECO:0007669"/>
    <property type="project" value="TreeGrafter"/>
</dbReference>
<dbReference type="GO" id="GO:0005524">
    <property type="term" value="F:ATP binding"/>
    <property type="evidence" value="ECO:0007669"/>
    <property type="project" value="UniProtKB-KW"/>
</dbReference>
<dbReference type="GO" id="GO:0016887">
    <property type="term" value="F:ATP hydrolysis activity"/>
    <property type="evidence" value="ECO:0007669"/>
    <property type="project" value="InterPro"/>
</dbReference>
<dbReference type="GO" id="GO:0140664">
    <property type="term" value="F:ATP-dependent DNA damage sensor activity"/>
    <property type="evidence" value="ECO:0007669"/>
    <property type="project" value="InterPro"/>
</dbReference>
<dbReference type="GO" id="GO:0003697">
    <property type="term" value="F:single-stranded DNA binding"/>
    <property type="evidence" value="ECO:0007669"/>
    <property type="project" value="InterPro"/>
</dbReference>
<dbReference type="GO" id="GO:0006310">
    <property type="term" value="P:DNA recombination"/>
    <property type="evidence" value="ECO:0007669"/>
    <property type="project" value="UniProtKB-KW"/>
</dbReference>
<dbReference type="GO" id="GO:0006281">
    <property type="term" value="P:DNA repair"/>
    <property type="evidence" value="ECO:0007669"/>
    <property type="project" value="UniProtKB-KW"/>
</dbReference>
<dbReference type="GO" id="GO:0009432">
    <property type="term" value="P:SOS response"/>
    <property type="evidence" value="ECO:0007669"/>
    <property type="project" value="UniProtKB-KW"/>
</dbReference>
<dbReference type="CDD" id="cd00983">
    <property type="entry name" value="RecA"/>
    <property type="match status" value="1"/>
</dbReference>
<dbReference type="FunFam" id="3.40.50.300:FF:000087">
    <property type="entry name" value="Recombinase RecA"/>
    <property type="match status" value="1"/>
</dbReference>
<dbReference type="Gene3D" id="3.40.50.300">
    <property type="entry name" value="P-loop containing nucleotide triphosphate hydrolases"/>
    <property type="match status" value="1"/>
</dbReference>
<dbReference type="InterPro" id="IPR003593">
    <property type="entry name" value="AAA+_ATPase"/>
</dbReference>
<dbReference type="InterPro" id="IPR013765">
    <property type="entry name" value="DNA_recomb/repair_RecA"/>
</dbReference>
<dbReference type="InterPro" id="IPR020584">
    <property type="entry name" value="DNA_recomb/repair_RecA_CS"/>
</dbReference>
<dbReference type="InterPro" id="IPR027417">
    <property type="entry name" value="P-loop_NTPase"/>
</dbReference>
<dbReference type="InterPro" id="IPR049428">
    <property type="entry name" value="RecA-like_N"/>
</dbReference>
<dbReference type="InterPro" id="IPR020588">
    <property type="entry name" value="RecA_ATP-bd"/>
</dbReference>
<dbReference type="InterPro" id="IPR020587">
    <property type="entry name" value="RecA_monomer-monomer_interface"/>
</dbReference>
<dbReference type="NCBIfam" id="TIGR02012">
    <property type="entry name" value="tigrfam_recA"/>
    <property type="match status" value="1"/>
</dbReference>
<dbReference type="PANTHER" id="PTHR45900:SF1">
    <property type="entry name" value="MITOCHONDRIAL DNA REPAIR PROTEIN RECA HOMOLOG-RELATED"/>
    <property type="match status" value="1"/>
</dbReference>
<dbReference type="PANTHER" id="PTHR45900">
    <property type="entry name" value="RECA"/>
    <property type="match status" value="1"/>
</dbReference>
<dbReference type="Pfam" id="PF00154">
    <property type="entry name" value="RecA"/>
    <property type="match status" value="1"/>
</dbReference>
<dbReference type="PRINTS" id="PR00142">
    <property type="entry name" value="RECA"/>
</dbReference>
<dbReference type="SMART" id="SM00382">
    <property type="entry name" value="AAA"/>
    <property type="match status" value="1"/>
</dbReference>
<dbReference type="SUPFAM" id="SSF52540">
    <property type="entry name" value="P-loop containing nucleoside triphosphate hydrolases"/>
    <property type="match status" value="1"/>
</dbReference>
<dbReference type="PROSITE" id="PS00321">
    <property type="entry name" value="RECA_1"/>
    <property type="match status" value="1"/>
</dbReference>
<dbReference type="PROSITE" id="PS50162">
    <property type="entry name" value="RECA_2"/>
    <property type="match status" value="1"/>
</dbReference>
<dbReference type="PROSITE" id="PS50163">
    <property type="entry name" value="RECA_3"/>
    <property type="match status" value="1"/>
</dbReference>
<accession>O86414</accession>
<gene>
    <name type="primary">recA</name>
</gene>
<protein>
    <recommendedName>
        <fullName>Protein RecA</fullName>
    </recommendedName>
    <alternativeName>
        <fullName>Recombinase A</fullName>
    </alternativeName>
</protein>